<dbReference type="EC" id="2.7.7.23" evidence="1"/>
<dbReference type="EC" id="2.3.1.157" evidence="1"/>
<dbReference type="EMBL" id="AL591974">
    <property type="protein sequence ID" value="CAD00725.1"/>
    <property type="molecule type" value="Genomic_DNA"/>
</dbReference>
<dbReference type="PIR" id="AG1099">
    <property type="entry name" value="AG1099"/>
</dbReference>
<dbReference type="RefSeq" id="NP_463729.1">
    <property type="nucleotide sequence ID" value="NC_003210.1"/>
</dbReference>
<dbReference type="RefSeq" id="WP_009931068.1">
    <property type="nucleotide sequence ID" value="NZ_CP149495.1"/>
</dbReference>
<dbReference type="SMR" id="Q8YAD4"/>
<dbReference type="STRING" id="169963.gene:17592834"/>
<dbReference type="PaxDb" id="169963-lmo0198"/>
<dbReference type="EnsemblBacteria" id="CAD00725">
    <property type="protein sequence ID" value="CAD00725"/>
    <property type="gene ID" value="CAD00725"/>
</dbReference>
<dbReference type="GeneID" id="987026"/>
<dbReference type="KEGG" id="lmo:lmo0198"/>
<dbReference type="PATRIC" id="fig|169963.11.peg.203"/>
<dbReference type="eggNOG" id="COG1207">
    <property type="taxonomic scope" value="Bacteria"/>
</dbReference>
<dbReference type="HOGENOM" id="CLU_029499_15_2_9"/>
<dbReference type="OrthoDB" id="9775031at2"/>
<dbReference type="PhylomeDB" id="Q8YAD4"/>
<dbReference type="BioCyc" id="LMON169963:LMO0198-MONOMER"/>
<dbReference type="UniPathway" id="UPA00113">
    <property type="reaction ID" value="UER00532"/>
</dbReference>
<dbReference type="UniPathway" id="UPA00113">
    <property type="reaction ID" value="UER00533"/>
</dbReference>
<dbReference type="UniPathway" id="UPA00973"/>
<dbReference type="Proteomes" id="UP000000817">
    <property type="component" value="Chromosome"/>
</dbReference>
<dbReference type="GO" id="GO:0005737">
    <property type="term" value="C:cytoplasm"/>
    <property type="evidence" value="ECO:0007669"/>
    <property type="project" value="UniProtKB-SubCell"/>
</dbReference>
<dbReference type="GO" id="GO:0016020">
    <property type="term" value="C:membrane"/>
    <property type="evidence" value="ECO:0007669"/>
    <property type="project" value="GOC"/>
</dbReference>
<dbReference type="GO" id="GO:0019134">
    <property type="term" value="F:glucosamine-1-phosphate N-acetyltransferase activity"/>
    <property type="evidence" value="ECO:0007669"/>
    <property type="project" value="UniProtKB-UniRule"/>
</dbReference>
<dbReference type="GO" id="GO:0000287">
    <property type="term" value="F:magnesium ion binding"/>
    <property type="evidence" value="ECO:0007669"/>
    <property type="project" value="UniProtKB-UniRule"/>
</dbReference>
<dbReference type="GO" id="GO:0003977">
    <property type="term" value="F:UDP-N-acetylglucosamine diphosphorylase activity"/>
    <property type="evidence" value="ECO:0007669"/>
    <property type="project" value="UniProtKB-UniRule"/>
</dbReference>
<dbReference type="GO" id="GO:0000902">
    <property type="term" value="P:cell morphogenesis"/>
    <property type="evidence" value="ECO:0007669"/>
    <property type="project" value="UniProtKB-UniRule"/>
</dbReference>
<dbReference type="GO" id="GO:0071555">
    <property type="term" value="P:cell wall organization"/>
    <property type="evidence" value="ECO:0007669"/>
    <property type="project" value="UniProtKB-KW"/>
</dbReference>
<dbReference type="GO" id="GO:0009245">
    <property type="term" value="P:lipid A biosynthetic process"/>
    <property type="evidence" value="ECO:0007669"/>
    <property type="project" value="UniProtKB-UniRule"/>
</dbReference>
<dbReference type="GO" id="GO:0009252">
    <property type="term" value="P:peptidoglycan biosynthetic process"/>
    <property type="evidence" value="ECO:0007669"/>
    <property type="project" value="UniProtKB-UniRule"/>
</dbReference>
<dbReference type="GO" id="GO:0008360">
    <property type="term" value="P:regulation of cell shape"/>
    <property type="evidence" value="ECO:0007669"/>
    <property type="project" value="UniProtKB-KW"/>
</dbReference>
<dbReference type="GO" id="GO:0006048">
    <property type="term" value="P:UDP-N-acetylglucosamine biosynthetic process"/>
    <property type="evidence" value="ECO:0007669"/>
    <property type="project" value="UniProtKB-UniPathway"/>
</dbReference>
<dbReference type="CDD" id="cd02540">
    <property type="entry name" value="GT2_GlmU_N_bac"/>
    <property type="match status" value="1"/>
</dbReference>
<dbReference type="CDD" id="cd03353">
    <property type="entry name" value="LbH_GlmU_C"/>
    <property type="match status" value="1"/>
</dbReference>
<dbReference type="Gene3D" id="2.160.10.10">
    <property type="entry name" value="Hexapeptide repeat proteins"/>
    <property type="match status" value="1"/>
</dbReference>
<dbReference type="Gene3D" id="3.90.550.10">
    <property type="entry name" value="Spore Coat Polysaccharide Biosynthesis Protein SpsA, Chain A"/>
    <property type="match status" value="1"/>
</dbReference>
<dbReference type="HAMAP" id="MF_01631">
    <property type="entry name" value="GlmU"/>
    <property type="match status" value="1"/>
</dbReference>
<dbReference type="InterPro" id="IPR005882">
    <property type="entry name" value="Bifunctional_GlmU"/>
</dbReference>
<dbReference type="InterPro" id="IPR050065">
    <property type="entry name" value="GlmU-like"/>
</dbReference>
<dbReference type="InterPro" id="IPR038009">
    <property type="entry name" value="GlmU_C_LbH"/>
</dbReference>
<dbReference type="InterPro" id="IPR001451">
    <property type="entry name" value="Hexapep"/>
</dbReference>
<dbReference type="InterPro" id="IPR018357">
    <property type="entry name" value="Hexapep_transf_CS"/>
</dbReference>
<dbReference type="InterPro" id="IPR005835">
    <property type="entry name" value="NTP_transferase_dom"/>
</dbReference>
<dbReference type="InterPro" id="IPR029044">
    <property type="entry name" value="Nucleotide-diphossugar_trans"/>
</dbReference>
<dbReference type="InterPro" id="IPR011004">
    <property type="entry name" value="Trimer_LpxA-like_sf"/>
</dbReference>
<dbReference type="NCBIfam" id="TIGR01173">
    <property type="entry name" value="glmU"/>
    <property type="match status" value="1"/>
</dbReference>
<dbReference type="NCBIfam" id="NF010934">
    <property type="entry name" value="PRK14354.1"/>
    <property type="match status" value="1"/>
</dbReference>
<dbReference type="PANTHER" id="PTHR43584:SF3">
    <property type="entry name" value="BIFUNCTIONAL PROTEIN GLMU"/>
    <property type="match status" value="1"/>
</dbReference>
<dbReference type="PANTHER" id="PTHR43584">
    <property type="entry name" value="NUCLEOTIDYL TRANSFERASE"/>
    <property type="match status" value="1"/>
</dbReference>
<dbReference type="Pfam" id="PF00132">
    <property type="entry name" value="Hexapep"/>
    <property type="match status" value="3"/>
</dbReference>
<dbReference type="Pfam" id="PF00483">
    <property type="entry name" value="NTP_transferase"/>
    <property type="match status" value="1"/>
</dbReference>
<dbReference type="SUPFAM" id="SSF53448">
    <property type="entry name" value="Nucleotide-diphospho-sugar transferases"/>
    <property type="match status" value="1"/>
</dbReference>
<dbReference type="SUPFAM" id="SSF51161">
    <property type="entry name" value="Trimeric LpxA-like enzymes"/>
    <property type="match status" value="1"/>
</dbReference>
<dbReference type="PROSITE" id="PS00101">
    <property type="entry name" value="HEXAPEP_TRANSFERASES"/>
    <property type="match status" value="1"/>
</dbReference>
<comment type="function">
    <text evidence="1">Catalyzes the last two sequential reactions in the de novo biosynthetic pathway for UDP-N-acetylglucosamine (UDP-GlcNAc). The C-terminal domain catalyzes the transfer of acetyl group from acetyl coenzyme A to glucosamine-1-phosphate (GlcN-1-P) to produce N-acetylglucosamine-1-phosphate (GlcNAc-1-P), which is converted into UDP-GlcNAc by the transfer of uridine 5-monophosphate (from uridine 5-triphosphate), a reaction catalyzed by the N-terminal domain.</text>
</comment>
<comment type="catalytic activity">
    <reaction evidence="1">
        <text>alpha-D-glucosamine 1-phosphate + acetyl-CoA = N-acetyl-alpha-D-glucosamine 1-phosphate + CoA + H(+)</text>
        <dbReference type="Rhea" id="RHEA:13725"/>
        <dbReference type="ChEBI" id="CHEBI:15378"/>
        <dbReference type="ChEBI" id="CHEBI:57287"/>
        <dbReference type="ChEBI" id="CHEBI:57288"/>
        <dbReference type="ChEBI" id="CHEBI:57776"/>
        <dbReference type="ChEBI" id="CHEBI:58516"/>
        <dbReference type="EC" id="2.3.1.157"/>
    </reaction>
</comment>
<comment type="catalytic activity">
    <reaction evidence="1">
        <text>N-acetyl-alpha-D-glucosamine 1-phosphate + UTP + H(+) = UDP-N-acetyl-alpha-D-glucosamine + diphosphate</text>
        <dbReference type="Rhea" id="RHEA:13509"/>
        <dbReference type="ChEBI" id="CHEBI:15378"/>
        <dbReference type="ChEBI" id="CHEBI:33019"/>
        <dbReference type="ChEBI" id="CHEBI:46398"/>
        <dbReference type="ChEBI" id="CHEBI:57705"/>
        <dbReference type="ChEBI" id="CHEBI:57776"/>
        <dbReference type="EC" id="2.7.7.23"/>
    </reaction>
</comment>
<comment type="cofactor">
    <cofactor evidence="1">
        <name>Mg(2+)</name>
        <dbReference type="ChEBI" id="CHEBI:18420"/>
    </cofactor>
    <text evidence="1">Binds 1 Mg(2+) ion per subunit.</text>
</comment>
<comment type="pathway">
    <text evidence="1">Nucleotide-sugar biosynthesis; UDP-N-acetyl-alpha-D-glucosamine biosynthesis; N-acetyl-alpha-D-glucosamine 1-phosphate from alpha-D-glucosamine 6-phosphate (route II): step 2/2.</text>
</comment>
<comment type="pathway">
    <text evidence="1">Nucleotide-sugar biosynthesis; UDP-N-acetyl-alpha-D-glucosamine biosynthesis; UDP-N-acetyl-alpha-D-glucosamine from N-acetyl-alpha-D-glucosamine 1-phosphate: step 1/1.</text>
</comment>
<comment type="pathway">
    <text evidence="1">Bacterial outer membrane biogenesis; LPS lipid A biosynthesis.</text>
</comment>
<comment type="subunit">
    <text evidence="1">Homotrimer.</text>
</comment>
<comment type="subcellular location">
    <subcellularLocation>
        <location evidence="1">Cytoplasm</location>
    </subcellularLocation>
</comment>
<comment type="similarity">
    <text evidence="1">In the N-terminal section; belongs to the N-acetylglucosamine-1-phosphate uridyltransferase family.</text>
</comment>
<comment type="similarity">
    <text evidence="1">In the C-terminal section; belongs to the transferase hexapeptide repeat family.</text>
</comment>
<proteinExistence type="inferred from homology"/>
<protein>
    <recommendedName>
        <fullName evidence="1">Bifunctional protein GlmU</fullName>
    </recommendedName>
    <domain>
        <recommendedName>
            <fullName evidence="1">UDP-N-acetylglucosamine pyrophosphorylase</fullName>
            <ecNumber evidence="1">2.7.7.23</ecNumber>
        </recommendedName>
        <alternativeName>
            <fullName evidence="1">N-acetylglucosamine-1-phosphate uridyltransferase</fullName>
        </alternativeName>
    </domain>
    <domain>
        <recommendedName>
            <fullName evidence="1">Glucosamine-1-phosphate N-acetyltransferase</fullName>
            <ecNumber evidence="1">2.3.1.157</ecNumber>
        </recommendedName>
    </domain>
</protein>
<accession>Q8YAD4</accession>
<organism>
    <name type="scientific">Listeria monocytogenes serovar 1/2a (strain ATCC BAA-679 / EGD-e)</name>
    <dbReference type="NCBI Taxonomy" id="169963"/>
    <lineage>
        <taxon>Bacteria</taxon>
        <taxon>Bacillati</taxon>
        <taxon>Bacillota</taxon>
        <taxon>Bacilli</taxon>
        <taxon>Bacillales</taxon>
        <taxon>Listeriaceae</taxon>
        <taxon>Listeria</taxon>
    </lineage>
</organism>
<feature type="chain" id="PRO_0000233795" description="Bifunctional protein GlmU">
    <location>
        <begin position="1"/>
        <end position="457"/>
    </location>
</feature>
<feature type="region of interest" description="Pyrophosphorylase" evidence="1">
    <location>
        <begin position="1"/>
        <end position="230"/>
    </location>
</feature>
<feature type="region of interest" description="Linker" evidence="1">
    <location>
        <begin position="231"/>
        <end position="251"/>
    </location>
</feature>
<feature type="region of interest" description="N-acetyltransferase" evidence="1">
    <location>
        <begin position="252"/>
        <end position="457"/>
    </location>
</feature>
<feature type="active site" description="Proton acceptor" evidence="1">
    <location>
        <position position="363"/>
    </location>
</feature>
<feature type="binding site" evidence="1">
    <location>
        <begin position="9"/>
        <end position="12"/>
    </location>
    <ligand>
        <name>UDP-N-acetyl-alpha-D-glucosamine</name>
        <dbReference type="ChEBI" id="CHEBI:57705"/>
    </ligand>
</feature>
<feature type="binding site" evidence="1">
    <location>
        <position position="23"/>
    </location>
    <ligand>
        <name>UDP-N-acetyl-alpha-D-glucosamine</name>
        <dbReference type="ChEBI" id="CHEBI:57705"/>
    </ligand>
</feature>
<feature type="binding site" evidence="1">
    <location>
        <position position="73"/>
    </location>
    <ligand>
        <name>UDP-N-acetyl-alpha-D-glucosamine</name>
        <dbReference type="ChEBI" id="CHEBI:57705"/>
    </ligand>
</feature>
<feature type="binding site" evidence="1">
    <location>
        <begin position="78"/>
        <end position="79"/>
    </location>
    <ligand>
        <name>UDP-N-acetyl-alpha-D-glucosamine</name>
        <dbReference type="ChEBI" id="CHEBI:57705"/>
    </ligand>
</feature>
<feature type="binding site" evidence="1">
    <location>
        <position position="103"/>
    </location>
    <ligand>
        <name>Mg(2+)</name>
        <dbReference type="ChEBI" id="CHEBI:18420"/>
    </ligand>
</feature>
<feature type="binding site" evidence="1">
    <location>
        <position position="140"/>
    </location>
    <ligand>
        <name>UDP-N-acetyl-alpha-D-glucosamine</name>
        <dbReference type="ChEBI" id="CHEBI:57705"/>
    </ligand>
</feature>
<feature type="binding site" evidence="1">
    <location>
        <position position="155"/>
    </location>
    <ligand>
        <name>UDP-N-acetyl-alpha-D-glucosamine</name>
        <dbReference type="ChEBI" id="CHEBI:57705"/>
    </ligand>
</feature>
<feature type="binding site" evidence="1">
    <location>
        <position position="170"/>
    </location>
    <ligand>
        <name>UDP-N-acetyl-alpha-D-glucosamine</name>
        <dbReference type="ChEBI" id="CHEBI:57705"/>
    </ligand>
</feature>
<feature type="binding site" evidence="1">
    <location>
        <position position="228"/>
    </location>
    <ligand>
        <name>Mg(2+)</name>
        <dbReference type="ChEBI" id="CHEBI:18420"/>
    </ligand>
</feature>
<feature type="binding site" evidence="1">
    <location>
        <position position="228"/>
    </location>
    <ligand>
        <name>UDP-N-acetyl-alpha-D-glucosamine</name>
        <dbReference type="ChEBI" id="CHEBI:57705"/>
    </ligand>
</feature>
<feature type="binding site" evidence="1">
    <location>
        <position position="333"/>
    </location>
    <ligand>
        <name>UDP-N-acetyl-alpha-D-glucosamine</name>
        <dbReference type="ChEBI" id="CHEBI:57705"/>
    </ligand>
</feature>
<feature type="binding site" evidence="1">
    <location>
        <position position="351"/>
    </location>
    <ligand>
        <name>UDP-N-acetyl-alpha-D-glucosamine</name>
        <dbReference type="ChEBI" id="CHEBI:57705"/>
    </ligand>
</feature>
<feature type="binding site" evidence="1">
    <location>
        <position position="366"/>
    </location>
    <ligand>
        <name>UDP-N-acetyl-alpha-D-glucosamine</name>
        <dbReference type="ChEBI" id="CHEBI:57705"/>
    </ligand>
</feature>
<feature type="binding site" evidence="1">
    <location>
        <position position="377"/>
    </location>
    <ligand>
        <name>UDP-N-acetyl-alpha-D-glucosamine</name>
        <dbReference type="ChEBI" id="CHEBI:57705"/>
    </ligand>
</feature>
<feature type="binding site" evidence="1">
    <location>
        <begin position="386"/>
        <end position="387"/>
    </location>
    <ligand>
        <name>acetyl-CoA</name>
        <dbReference type="ChEBI" id="CHEBI:57288"/>
    </ligand>
</feature>
<feature type="binding site" evidence="1">
    <location>
        <position position="423"/>
    </location>
    <ligand>
        <name>acetyl-CoA</name>
        <dbReference type="ChEBI" id="CHEBI:57288"/>
    </ligand>
</feature>
<feature type="binding site" evidence="1">
    <location>
        <position position="440"/>
    </location>
    <ligand>
        <name>acetyl-CoA</name>
        <dbReference type="ChEBI" id="CHEBI:57288"/>
    </ligand>
</feature>
<sequence>MSKRYAVVLAAGQGTRMKSKLYKVLHPVCGKPMVEHVVDQISTLNVDKVVTIVGHGAEKVQEHLAGKSEFVKQDEQLGTAHAVLQAKAELAGKDGVTLVVCGDTPLIEASTMEALLKYHHEKRAKATILTTVIEDPTGYGRIIRDDLGIVEKIVEHKDATEKEQRISEINTGTYCFDNKALFEALENVSNDNVQGEYYLPDVIKILKDSDEVVAAYRMESFEESLGVNDRIALAEASKLMQRRINENHMRNGVTLVNPESTYIDIDVKIGQDTVIEPGVMLRGKTVIGDDCVVTSGSEIVNSVIGERVHVRTSSIFESKVGDDVQIGPYAHLRPESDIHDHVKIGNYVETKKAVVGEGTKLPHFIYMGDAEIGKNVNVGCGSIAVNYDGKNKAKTIIGDNVFVGCNSNLIAPVKVGDRAFIAAGSTITKDVPEDALGIARAKQDNKLGYAKHLNHSK</sequence>
<keyword id="KW-0012">Acyltransferase</keyword>
<keyword id="KW-0133">Cell shape</keyword>
<keyword id="KW-0961">Cell wall biogenesis/degradation</keyword>
<keyword id="KW-0963">Cytoplasm</keyword>
<keyword id="KW-0460">Magnesium</keyword>
<keyword id="KW-0479">Metal-binding</keyword>
<keyword id="KW-0511">Multifunctional enzyme</keyword>
<keyword id="KW-0548">Nucleotidyltransferase</keyword>
<keyword id="KW-0573">Peptidoglycan synthesis</keyword>
<keyword id="KW-1185">Reference proteome</keyword>
<keyword id="KW-0677">Repeat</keyword>
<keyword id="KW-0808">Transferase</keyword>
<gene>
    <name evidence="1" type="primary">glmU</name>
    <name type="ordered locus">lmo0198</name>
</gene>
<evidence type="ECO:0000255" key="1">
    <source>
        <dbReference type="HAMAP-Rule" id="MF_01631"/>
    </source>
</evidence>
<name>GLMU_LISMO</name>
<reference key="1">
    <citation type="journal article" date="2001" name="Science">
        <title>Comparative genomics of Listeria species.</title>
        <authorList>
            <person name="Glaser P."/>
            <person name="Frangeul L."/>
            <person name="Buchrieser C."/>
            <person name="Rusniok C."/>
            <person name="Amend A."/>
            <person name="Baquero F."/>
            <person name="Berche P."/>
            <person name="Bloecker H."/>
            <person name="Brandt P."/>
            <person name="Chakraborty T."/>
            <person name="Charbit A."/>
            <person name="Chetouani F."/>
            <person name="Couve E."/>
            <person name="de Daruvar A."/>
            <person name="Dehoux P."/>
            <person name="Domann E."/>
            <person name="Dominguez-Bernal G."/>
            <person name="Duchaud E."/>
            <person name="Durant L."/>
            <person name="Dussurget O."/>
            <person name="Entian K.-D."/>
            <person name="Fsihi H."/>
            <person name="Garcia-del Portillo F."/>
            <person name="Garrido P."/>
            <person name="Gautier L."/>
            <person name="Goebel W."/>
            <person name="Gomez-Lopez N."/>
            <person name="Hain T."/>
            <person name="Hauf J."/>
            <person name="Jackson D."/>
            <person name="Jones L.-M."/>
            <person name="Kaerst U."/>
            <person name="Kreft J."/>
            <person name="Kuhn M."/>
            <person name="Kunst F."/>
            <person name="Kurapkat G."/>
            <person name="Madueno E."/>
            <person name="Maitournam A."/>
            <person name="Mata Vicente J."/>
            <person name="Ng E."/>
            <person name="Nedjari H."/>
            <person name="Nordsiek G."/>
            <person name="Novella S."/>
            <person name="de Pablos B."/>
            <person name="Perez-Diaz J.-C."/>
            <person name="Purcell R."/>
            <person name="Remmel B."/>
            <person name="Rose M."/>
            <person name="Schlueter T."/>
            <person name="Simoes N."/>
            <person name="Tierrez A."/>
            <person name="Vazquez-Boland J.-A."/>
            <person name="Voss H."/>
            <person name="Wehland J."/>
            <person name="Cossart P."/>
        </authorList>
    </citation>
    <scope>NUCLEOTIDE SEQUENCE [LARGE SCALE GENOMIC DNA]</scope>
    <source>
        <strain>ATCC BAA-679 / EGD-e</strain>
    </source>
</reference>